<proteinExistence type="inferred from homology"/>
<dbReference type="EC" id="2.7.1.148" evidence="1"/>
<dbReference type="EMBL" id="CP001091">
    <property type="protein sequence ID" value="ACE61489.1"/>
    <property type="molecule type" value="Genomic_DNA"/>
</dbReference>
<dbReference type="RefSeq" id="WP_005604345.1">
    <property type="nucleotide sequence ID" value="NC_010939.1"/>
</dbReference>
<dbReference type="SMR" id="B3H1B7"/>
<dbReference type="KEGG" id="apa:APP7_0837"/>
<dbReference type="HOGENOM" id="CLU_053057_3_0_6"/>
<dbReference type="UniPathway" id="UPA00056">
    <property type="reaction ID" value="UER00094"/>
</dbReference>
<dbReference type="Proteomes" id="UP000001226">
    <property type="component" value="Chromosome"/>
</dbReference>
<dbReference type="GO" id="GO:0050515">
    <property type="term" value="F:4-(cytidine 5'-diphospho)-2-C-methyl-D-erythritol kinase activity"/>
    <property type="evidence" value="ECO:0007669"/>
    <property type="project" value="UniProtKB-UniRule"/>
</dbReference>
<dbReference type="GO" id="GO:0005524">
    <property type="term" value="F:ATP binding"/>
    <property type="evidence" value="ECO:0007669"/>
    <property type="project" value="UniProtKB-UniRule"/>
</dbReference>
<dbReference type="GO" id="GO:0019288">
    <property type="term" value="P:isopentenyl diphosphate biosynthetic process, methylerythritol 4-phosphate pathway"/>
    <property type="evidence" value="ECO:0007669"/>
    <property type="project" value="UniProtKB-UniRule"/>
</dbReference>
<dbReference type="GO" id="GO:0016114">
    <property type="term" value="P:terpenoid biosynthetic process"/>
    <property type="evidence" value="ECO:0007669"/>
    <property type="project" value="InterPro"/>
</dbReference>
<dbReference type="FunFam" id="3.30.230.10:FF:000022">
    <property type="entry name" value="4-diphosphocytidyl-2-C-methyl-D-erythritol kinase"/>
    <property type="match status" value="1"/>
</dbReference>
<dbReference type="Gene3D" id="3.30.230.10">
    <property type="match status" value="1"/>
</dbReference>
<dbReference type="Gene3D" id="3.30.70.890">
    <property type="entry name" value="GHMP kinase, C-terminal domain"/>
    <property type="match status" value="1"/>
</dbReference>
<dbReference type="HAMAP" id="MF_00061">
    <property type="entry name" value="IspE"/>
    <property type="match status" value="1"/>
</dbReference>
<dbReference type="InterPro" id="IPR013750">
    <property type="entry name" value="GHMP_kinase_C_dom"/>
</dbReference>
<dbReference type="InterPro" id="IPR036554">
    <property type="entry name" value="GHMP_kinase_C_sf"/>
</dbReference>
<dbReference type="InterPro" id="IPR006204">
    <property type="entry name" value="GHMP_kinase_N_dom"/>
</dbReference>
<dbReference type="InterPro" id="IPR004424">
    <property type="entry name" value="IspE"/>
</dbReference>
<dbReference type="InterPro" id="IPR020568">
    <property type="entry name" value="Ribosomal_Su5_D2-typ_SF"/>
</dbReference>
<dbReference type="InterPro" id="IPR014721">
    <property type="entry name" value="Ribsml_uS5_D2-typ_fold_subgr"/>
</dbReference>
<dbReference type="NCBIfam" id="TIGR00154">
    <property type="entry name" value="ispE"/>
    <property type="match status" value="1"/>
</dbReference>
<dbReference type="PANTHER" id="PTHR43527">
    <property type="entry name" value="4-DIPHOSPHOCYTIDYL-2-C-METHYL-D-ERYTHRITOL KINASE, CHLOROPLASTIC"/>
    <property type="match status" value="1"/>
</dbReference>
<dbReference type="PANTHER" id="PTHR43527:SF2">
    <property type="entry name" value="4-DIPHOSPHOCYTIDYL-2-C-METHYL-D-ERYTHRITOL KINASE, CHLOROPLASTIC"/>
    <property type="match status" value="1"/>
</dbReference>
<dbReference type="Pfam" id="PF08544">
    <property type="entry name" value="GHMP_kinases_C"/>
    <property type="match status" value="1"/>
</dbReference>
<dbReference type="Pfam" id="PF00288">
    <property type="entry name" value="GHMP_kinases_N"/>
    <property type="match status" value="1"/>
</dbReference>
<dbReference type="PIRSF" id="PIRSF010376">
    <property type="entry name" value="IspE"/>
    <property type="match status" value="1"/>
</dbReference>
<dbReference type="SUPFAM" id="SSF55060">
    <property type="entry name" value="GHMP Kinase, C-terminal domain"/>
    <property type="match status" value="1"/>
</dbReference>
<dbReference type="SUPFAM" id="SSF54211">
    <property type="entry name" value="Ribosomal protein S5 domain 2-like"/>
    <property type="match status" value="1"/>
</dbReference>
<sequence>MTKKIILPSPAKLNLFLYITNKRVDGYHELQTLFQFLDFGDDISLEVNESGEIELLNAIEGVAKEQNLIYRAAKLLQNHTACSKGAKIGVTKRLPMGGGVGGGSSNAATVLVGLNHFWQTGLSLEQLAELGLSLGADVPIFVRGFAAFAEGVGEKLVACQPRESWYVVLKPNVSISTAAVFQDPNLPRNTPKRTLSRLLSEEWTNDCEKVVRDHYFEVEDLIAELLQYATFRLTGTGACIFAEFESEAEAKAVFAHKPHNIFGFIAKGQNRSPLHQMLNLTTFPQ</sequence>
<keyword id="KW-0067">ATP-binding</keyword>
<keyword id="KW-0414">Isoprene biosynthesis</keyword>
<keyword id="KW-0418">Kinase</keyword>
<keyword id="KW-0547">Nucleotide-binding</keyword>
<keyword id="KW-0808">Transferase</keyword>
<evidence type="ECO:0000255" key="1">
    <source>
        <dbReference type="HAMAP-Rule" id="MF_00061"/>
    </source>
</evidence>
<feature type="chain" id="PRO_1000092056" description="4-diphosphocytidyl-2-C-methyl-D-erythritol kinase">
    <location>
        <begin position="1"/>
        <end position="285"/>
    </location>
</feature>
<feature type="active site" evidence="1">
    <location>
        <position position="12"/>
    </location>
</feature>
<feature type="active site" evidence="1">
    <location>
        <position position="137"/>
    </location>
</feature>
<feature type="binding site" evidence="1">
    <location>
        <begin position="95"/>
        <end position="105"/>
    </location>
    <ligand>
        <name>ATP</name>
        <dbReference type="ChEBI" id="CHEBI:30616"/>
    </ligand>
</feature>
<protein>
    <recommendedName>
        <fullName evidence="1">4-diphosphocytidyl-2-C-methyl-D-erythritol kinase</fullName>
        <shortName evidence="1">CMK</shortName>
        <ecNumber evidence="1">2.7.1.148</ecNumber>
    </recommendedName>
    <alternativeName>
        <fullName evidence="1">4-(cytidine-5'-diphospho)-2-C-methyl-D-erythritol kinase</fullName>
    </alternativeName>
</protein>
<accession>B3H1B7</accession>
<comment type="function">
    <text evidence="1">Catalyzes the phosphorylation of the position 2 hydroxy group of 4-diphosphocytidyl-2C-methyl-D-erythritol.</text>
</comment>
<comment type="catalytic activity">
    <reaction evidence="1">
        <text>4-CDP-2-C-methyl-D-erythritol + ATP = 4-CDP-2-C-methyl-D-erythritol 2-phosphate + ADP + H(+)</text>
        <dbReference type="Rhea" id="RHEA:18437"/>
        <dbReference type="ChEBI" id="CHEBI:15378"/>
        <dbReference type="ChEBI" id="CHEBI:30616"/>
        <dbReference type="ChEBI" id="CHEBI:57823"/>
        <dbReference type="ChEBI" id="CHEBI:57919"/>
        <dbReference type="ChEBI" id="CHEBI:456216"/>
        <dbReference type="EC" id="2.7.1.148"/>
    </reaction>
</comment>
<comment type="pathway">
    <text evidence="1">Isoprenoid biosynthesis; isopentenyl diphosphate biosynthesis via DXP pathway; isopentenyl diphosphate from 1-deoxy-D-xylulose 5-phosphate: step 3/6.</text>
</comment>
<comment type="similarity">
    <text evidence="1">Belongs to the GHMP kinase family. IspE subfamily.</text>
</comment>
<organism>
    <name type="scientific">Actinobacillus pleuropneumoniae serotype 7 (strain AP76)</name>
    <dbReference type="NCBI Taxonomy" id="537457"/>
    <lineage>
        <taxon>Bacteria</taxon>
        <taxon>Pseudomonadati</taxon>
        <taxon>Pseudomonadota</taxon>
        <taxon>Gammaproteobacteria</taxon>
        <taxon>Pasteurellales</taxon>
        <taxon>Pasteurellaceae</taxon>
        <taxon>Actinobacillus</taxon>
    </lineage>
</organism>
<gene>
    <name evidence="1" type="primary">ispE</name>
    <name type="ordered locus">APP7_0837</name>
</gene>
<reference key="1">
    <citation type="submission" date="2008-06" db="EMBL/GenBank/DDBJ databases">
        <title>Genome and proteome analysis of A. pleuropneumoniae serotype 7.</title>
        <authorList>
            <person name="Linke B."/>
            <person name="Buettner F."/>
            <person name="Martinez-Arias R."/>
            <person name="Goesmann A."/>
            <person name="Baltes N."/>
            <person name="Tegetmeyer H."/>
            <person name="Singh M."/>
            <person name="Gerlach G.F."/>
        </authorList>
    </citation>
    <scope>NUCLEOTIDE SEQUENCE [LARGE SCALE GENOMIC DNA]</scope>
    <source>
        <strain>AP76</strain>
    </source>
</reference>
<name>ISPE_ACTP7</name>